<evidence type="ECO:0000250" key="1">
    <source>
        <dbReference type="UniProtKB" id="Q96GS4"/>
    </source>
</evidence>
<evidence type="ECO:0000250" key="2">
    <source>
        <dbReference type="UniProtKB" id="Q9D6W8"/>
    </source>
</evidence>
<evidence type="ECO:0000256" key="3">
    <source>
        <dbReference type="SAM" id="MobiDB-lite"/>
    </source>
</evidence>
<evidence type="ECO:0000305" key="4"/>
<evidence type="ECO:0000312" key="5">
    <source>
        <dbReference type="RGD" id="1563885"/>
    </source>
</evidence>
<name>BORC6_RAT</name>
<feature type="chain" id="PRO_0000286828" description="BLOC-1-related complex subunit 6">
    <location>
        <begin position="1"/>
        <end position="360"/>
    </location>
</feature>
<feature type="region of interest" description="Disordered" evidence="3">
    <location>
        <begin position="1"/>
        <end position="201"/>
    </location>
</feature>
<feature type="compositionally biased region" description="Basic and acidic residues" evidence="3">
    <location>
        <begin position="1"/>
        <end position="10"/>
    </location>
</feature>
<feature type="compositionally biased region" description="Polar residues" evidence="3">
    <location>
        <begin position="23"/>
        <end position="35"/>
    </location>
</feature>
<feature type="compositionally biased region" description="Basic and acidic residues" evidence="3">
    <location>
        <begin position="71"/>
        <end position="83"/>
    </location>
</feature>
<feature type="compositionally biased region" description="Low complexity" evidence="3">
    <location>
        <begin position="89"/>
        <end position="100"/>
    </location>
</feature>
<feature type="compositionally biased region" description="Acidic residues" evidence="3">
    <location>
        <begin position="144"/>
        <end position="156"/>
    </location>
</feature>
<feature type="compositionally biased region" description="Gly residues" evidence="3">
    <location>
        <begin position="179"/>
        <end position="198"/>
    </location>
</feature>
<feature type="modified residue" description="Phosphothreonine" evidence="2">
    <location>
        <position position="41"/>
    </location>
</feature>
<feature type="modified residue" description="Phosphoserine" evidence="2">
    <location>
        <position position="130"/>
    </location>
</feature>
<feature type="modified residue" description="Phosphoserine" evidence="1">
    <location>
        <position position="173"/>
    </location>
</feature>
<feature type="modified residue" description="Phosphothreonine" evidence="1">
    <location>
        <position position="201"/>
    </location>
</feature>
<feature type="modified residue" description="Phosphoserine" evidence="1">
    <location>
        <position position="204"/>
    </location>
</feature>
<keyword id="KW-0458">Lysosome</keyword>
<keyword id="KW-0472">Membrane</keyword>
<keyword id="KW-0597">Phosphoprotein</keyword>
<keyword id="KW-1185">Reference proteome</keyword>
<gene>
    <name evidence="5" type="primary">Borcs6</name>
</gene>
<comment type="function">
    <text evidence="1">As part of the BORC complex may play a role in lysosomes movement and localization at the cell periphery. Associated with the cytosolic face of lysosomes, the BORC complex may recruit ARL8B and couple lysosomes to microtubule plus-end-directed kinesin motor.</text>
</comment>
<comment type="subunit">
    <text evidence="1">Component of the BLOC-one-related complex (BORC) which is composed of BLOC1S1, BLOC1S2, BORCS5, BORCS6, BORCS7, BORCS8, KXD1 and SNAPIN.</text>
</comment>
<comment type="subcellular location">
    <subcellularLocation>
        <location evidence="1">Lysosome membrane</location>
    </subcellularLocation>
</comment>
<comment type="similarity">
    <text evidence="4">Belongs to the BORCS6 family.</text>
</comment>
<comment type="sequence caution" evidence="4">
    <conflict type="erroneous initiation">
        <sequence resource="EMBL-CDS" id="AAH82026"/>
    </conflict>
    <text>Truncated N-terminus.</text>
</comment>
<accession>Q66H43</accession>
<organism>
    <name type="scientific">Rattus norvegicus</name>
    <name type="common">Rat</name>
    <dbReference type="NCBI Taxonomy" id="10116"/>
    <lineage>
        <taxon>Eukaryota</taxon>
        <taxon>Metazoa</taxon>
        <taxon>Chordata</taxon>
        <taxon>Craniata</taxon>
        <taxon>Vertebrata</taxon>
        <taxon>Euteleostomi</taxon>
        <taxon>Mammalia</taxon>
        <taxon>Eutheria</taxon>
        <taxon>Euarchontoglires</taxon>
        <taxon>Glires</taxon>
        <taxon>Rodentia</taxon>
        <taxon>Myomorpha</taxon>
        <taxon>Muroidea</taxon>
        <taxon>Muridae</taxon>
        <taxon>Murinae</taxon>
        <taxon>Rattus</taxon>
    </lineage>
</organism>
<proteinExistence type="evidence at transcript level"/>
<reference key="1">
    <citation type="journal article" date="2004" name="Genome Res.">
        <title>The status, quality, and expansion of the NIH full-length cDNA project: the Mammalian Gene Collection (MGC).</title>
        <authorList>
            <consortium name="The MGC Project Team"/>
        </authorList>
    </citation>
    <scope>NUCLEOTIDE SEQUENCE [LARGE SCALE MRNA]</scope>
    <source>
        <tissue>Kidney</tissue>
    </source>
</reference>
<dbReference type="EMBL" id="BC082026">
    <property type="protein sequence ID" value="AAH82026.1"/>
    <property type="status" value="ALT_INIT"/>
    <property type="molecule type" value="mRNA"/>
</dbReference>
<dbReference type="RefSeq" id="NP_001017474.2">
    <property type="nucleotide sequence ID" value="NM_001017474.1"/>
</dbReference>
<dbReference type="SMR" id="Q66H43"/>
<dbReference type="FunCoup" id="Q66H43">
    <property type="interactions" value="203"/>
</dbReference>
<dbReference type="STRING" id="10116.ENSRNOP00000008507"/>
<dbReference type="GlyGen" id="Q66H43">
    <property type="glycosylation" value="2 sites"/>
</dbReference>
<dbReference type="iPTMnet" id="Q66H43"/>
<dbReference type="PhosphoSitePlus" id="Q66H43"/>
<dbReference type="jPOST" id="Q66H43"/>
<dbReference type="PaxDb" id="10116-ENSRNOP00000008507"/>
<dbReference type="Ensembl" id="ENSRNOT00000008507.6">
    <property type="protein sequence ID" value="ENSRNOP00000008507.4"/>
    <property type="gene ID" value="ENSRNOG00000006513.6"/>
</dbReference>
<dbReference type="GeneID" id="497934"/>
<dbReference type="KEGG" id="rno:497934"/>
<dbReference type="UCSC" id="RGD:1563885">
    <property type="organism name" value="rat"/>
</dbReference>
<dbReference type="AGR" id="RGD:1563885"/>
<dbReference type="CTD" id="54785"/>
<dbReference type="RGD" id="1563885">
    <property type="gene designation" value="Borcs6"/>
</dbReference>
<dbReference type="eggNOG" id="KOG4514">
    <property type="taxonomic scope" value="Eukaryota"/>
</dbReference>
<dbReference type="GeneTree" id="ENSGT00490000043453"/>
<dbReference type="HOGENOM" id="CLU_782948_0_0_1"/>
<dbReference type="InParanoid" id="Q66H43"/>
<dbReference type="OMA" id="PPEWEAP"/>
<dbReference type="OrthoDB" id="21270at2759"/>
<dbReference type="PhylomeDB" id="Q66H43"/>
<dbReference type="PRO" id="PR:Q66H43"/>
<dbReference type="Proteomes" id="UP000002494">
    <property type="component" value="Chromosome 10"/>
</dbReference>
<dbReference type="Bgee" id="ENSRNOG00000006513">
    <property type="expression patterns" value="Expressed in testis and 19 other cell types or tissues"/>
</dbReference>
<dbReference type="GO" id="GO:0099078">
    <property type="term" value="C:BORC complex"/>
    <property type="evidence" value="ECO:0000250"/>
    <property type="project" value="UniProtKB"/>
</dbReference>
<dbReference type="GO" id="GO:0005765">
    <property type="term" value="C:lysosomal membrane"/>
    <property type="evidence" value="ECO:0007669"/>
    <property type="project" value="UniProtKB-SubCell"/>
</dbReference>
<dbReference type="GO" id="GO:0042802">
    <property type="term" value="F:identical protein binding"/>
    <property type="evidence" value="ECO:0000266"/>
    <property type="project" value="RGD"/>
</dbReference>
<dbReference type="GO" id="GO:0032418">
    <property type="term" value="P:lysosome localization"/>
    <property type="evidence" value="ECO:0000250"/>
    <property type="project" value="UniProtKB"/>
</dbReference>
<dbReference type="InterPro" id="IPR019314">
    <property type="entry name" value="BORCS6"/>
</dbReference>
<dbReference type="InterPro" id="IPR046465">
    <property type="entry name" value="BORCS6_C"/>
</dbReference>
<dbReference type="PANTHER" id="PTHR13440">
    <property type="entry name" value="BLOC-1 RELATED COMPLEX SUBUNIT 6"/>
    <property type="match status" value="1"/>
</dbReference>
<dbReference type="PANTHER" id="PTHR13440:SF8">
    <property type="entry name" value="BLOC-1-RELATED COMPLEX SUBUNIT 6"/>
    <property type="match status" value="1"/>
</dbReference>
<dbReference type="Pfam" id="PF10157">
    <property type="entry name" value="BORCS6"/>
    <property type="match status" value="1"/>
</dbReference>
<protein>
    <recommendedName>
        <fullName evidence="4">BLOC-1-related complex subunit 6</fullName>
    </recommendedName>
</protein>
<sequence>MEAARGRLGPEQDLSTGADHQAVTFSGRPSRTLSKPPSARTLSGEEEAESVGVASRHPRPSPKTSSGSIAHRPELDTWEDKPSARATPSGARGSRGTSGSEHTPPPSSWYPEPEPSEDQPSALTVCRRGSPGGVEMNVELPQQEGDDDDDGDDEEAADRAGHSFPSRLQDSRSLDGLSGACGGGGSSSSGEAGAGGGRRATISSPLELEGTVSRHGDLTHFVANNLQLKIRLSGAPSPVPPASGRPCLTPAPTPTIPPIDPDVLRDLERLSRELGGRVDRLLCGLGGAVQELTALSVGCIQTYRDAVDSLGEAVDMSIKGMYTLLARCEELERALQPVQGLARQVRDIRRTLEVLEALCK</sequence>